<sequence length="349" mass="36864">MTELTLQNHCRTMWHFIPGLALSAVITGVALWGGAIPAVAGAGFSALTLAILLGMVIGNTIYPQIWKQCDGGVLFAKQHLLRLGIILYGFRLTFSQIADVGISGIVIDVLTLSSTFMLACFLGQKVFGLDRHTSWLIGAGSSICGAAAVLATEPVVKAEASKVTVAVATVVIFGTIAIFLYPAMYPLLAHWFSPETYGIYIGSTMHEVAQVVAAGHAVSPDAENAAVIAKMLRVMMLAPFLIILAARVKQLSPATGAEKSKITIPWFAIFFIVVAIFNSFHLLPKAVVDMLVTLDTVLLAMAMAALGLTTHVSALKKAGAKPLLMALALFAWLIIGGGAINVLIHSLIA</sequence>
<keyword id="KW-0997">Cell inner membrane</keyword>
<keyword id="KW-1003">Cell membrane</keyword>
<keyword id="KW-0472">Membrane</keyword>
<keyword id="KW-1185">Reference proteome</keyword>
<keyword id="KW-0812">Transmembrane</keyword>
<keyword id="KW-1133">Transmembrane helix</keyword>
<gene>
    <name type="primary">yeiH</name>
    <name type="ordered locus">STM2202</name>
</gene>
<comment type="subcellular location">
    <subcellularLocation>
        <location evidence="1">Cell inner membrane</location>
        <topology evidence="1">Multi-pass membrane protein</topology>
    </subcellularLocation>
</comment>
<comment type="similarity">
    <text evidence="3">Belongs to the UPF0324 family.</text>
</comment>
<dbReference type="EMBL" id="AE006468">
    <property type="protein sequence ID" value="AAL21106.1"/>
    <property type="molecule type" value="Genomic_DNA"/>
</dbReference>
<dbReference type="RefSeq" id="NP_461147.1">
    <property type="nucleotide sequence ID" value="NC_003197.2"/>
</dbReference>
<dbReference type="RefSeq" id="WP_000137960.1">
    <property type="nucleotide sequence ID" value="NC_003197.2"/>
</dbReference>
<dbReference type="STRING" id="99287.STM2202"/>
<dbReference type="PaxDb" id="99287-STM2202"/>
<dbReference type="GeneID" id="1253724"/>
<dbReference type="KEGG" id="stm:STM2202"/>
<dbReference type="PATRIC" id="fig|99287.12.peg.2331"/>
<dbReference type="HOGENOM" id="CLU_033541_0_0_6"/>
<dbReference type="PhylomeDB" id="Q8ZNK7"/>
<dbReference type="BioCyc" id="SENT99287:STM2202-MONOMER"/>
<dbReference type="Proteomes" id="UP000001014">
    <property type="component" value="Chromosome"/>
</dbReference>
<dbReference type="GO" id="GO:0005886">
    <property type="term" value="C:plasma membrane"/>
    <property type="evidence" value="ECO:0000318"/>
    <property type="project" value="GO_Central"/>
</dbReference>
<dbReference type="InterPro" id="IPR018383">
    <property type="entry name" value="UPF0324_pro"/>
</dbReference>
<dbReference type="InterPro" id="IPR004630">
    <property type="entry name" value="UPF0324_YeiH-like"/>
</dbReference>
<dbReference type="NCBIfam" id="TIGR00698">
    <property type="entry name" value="YeiH family putative sulfate export transporter"/>
    <property type="match status" value="1"/>
</dbReference>
<dbReference type="PANTHER" id="PTHR30106">
    <property type="entry name" value="INNER MEMBRANE PROTEIN YEIH-RELATED"/>
    <property type="match status" value="1"/>
</dbReference>
<dbReference type="PANTHER" id="PTHR30106:SF2">
    <property type="entry name" value="UPF0324 INNER MEMBRANE PROTEIN YEIH"/>
    <property type="match status" value="1"/>
</dbReference>
<dbReference type="Pfam" id="PF03601">
    <property type="entry name" value="Cons_hypoth698"/>
    <property type="match status" value="1"/>
</dbReference>
<name>YEIH_SALTY</name>
<accession>Q8ZNK7</accession>
<feature type="chain" id="PRO_0000157448" description="UPF0324 inner membrane protein YeiH">
    <location>
        <begin position="1"/>
        <end position="349"/>
    </location>
</feature>
<feature type="topological domain" description="Periplasmic" evidence="2">
    <location>
        <begin position="1"/>
        <end position="12"/>
    </location>
</feature>
<feature type="transmembrane region" description="Helical" evidence="2">
    <location>
        <begin position="13"/>
        <end position="35"/>
    </location>
</feature>
<feature type="topological domain" description="Cytoplasmic" evidence="2">
    <location>
        <begin position="36"/>
        <end position="38"/>
    </location>
</feature>
<feature type="transmembrane region" description="Helical" evidence="2">
    <location>
        <begin position="39"/>
        <end position="61"/>
    </location>
</feature>
<feature type="topological domain" description="Periplasmic" evidence="2">
    <location>
        <begin position="62"/>
        <end position="99"/>
    </location>
</feature>
<feature type="transmembrane region" description="Helical" evidence="2">
    <location>
        <begin position="100"/>
        <end position="122"/>
    </location>
</feature>
<feature type="topological domain" description="Cytoplasmic" evidence="2">
    <location>
        <begin position="123"/>
        <end position="131"/>
    </location>
</feature>
<feature type="transmembrane region" description="Helical" evidence="2">
    <location>
        <begin position="132"/>
        <end position="151"/>
    </location>
</feature>
<feature type="topological domain" description="Periplasmic" evidence="2">
    <location>
        <begin position="152"/>
        <end position="162"/>
    </location>
</feature>
<feature type="transmembrane region" description="Helical" evidence="2">
    <location>
        <begin position="163"/>
        <end position="185"/>
    </location>
</feature>
<feature type="topological domain" description="Cytoplasmic" evidence="2">
    <location>
        <begin position="186"/>
        <end position="261"/>
    </location>
</feature>
<feature type="transmembrane region" description="Helical" evidence="2">
    <location>
        <begin position="262"/>
        <end position="284"/>
    </location>
</feature>
<feature type="topological domain" description="Periplasmic" evidence="2">
    <location>
        <begin position="285"/>
        <end position="290"/>
    </location>
</feature>
<feature type="transmembrane region" description="Helical" evidence="2">
    <location>
        <begin position="291"/>
        <end position="313"/>
    </location>
</feature>
<feature type="topological domain" description="Cytoplasmic" evidence="2">
    <location>
        <begin position="314"/>
        <end position="322"/>
    </location>
</feature>
<feature type="transmembrane region" description="Helical" evidence="2">
    <location>
        <begin position="323"/>
        <end position="345"/>
    </location>
</feature>
<feature type="topological domain" description="Periplasmic" evidence="2">
    <location>
        <begin position="346"/>
        <end position="349"/>
    </location>
</feature>
<protein>
    <recommendedName>
        <fullName>UPF0324 inner membrane protein YeiH</fullName>
    </recommendedName>
</protein>
<reference key="1">
    <citation type="journal article" date="2001" name="Nature">
        <title>Complete genome sequence of Salmonella enterica serovar Typhimurium LT2.</title>
        <authorList>
            <person name="McClelland M."/>
            <person name="Sanderson K.E."/>
            <person name="Spieth J."/>
            <person name="Clifton S.W."/>
            <person name="Latreille P."/>
            <person name="Courtney L."/>
            <person name="Porwollik S."/>
            <person name="Ali J."/>
            <person name="Dante M."/>
            <person name="Du F."/>
            <person name="Hou S."/>
            <person name="Layman D."/>
            <person name="Leonard S."/>
            <person name="Nguyen C."/>
            <person name="Scott K."/>
            <person name="Holmes A."/>
            <person name="Grewal N."/>
            <person name="Mulvaney E."/>
            <person name="Ryan E."/>
            <person name="Sun H."/>
            <person name="Florea L."/>
            <person name="Miller W."/>
            <person name="Stoneking T."/>
            <person name="Nhan M."/>
            <person name="Waterston R."/>
            <person name="Wilson R.K."/>
        </authorList>
    </citation>
    <scope>NUCLEOTIDE SEQUENCE [LARGE SCALE GENOMIC DNA]</scope>
    <source>
        <strain>LT2 / SGSC1412 / ATCC 700720</strain>
    </source>
</reference>
<proteinExistence type="inferred from homology"/>
<organism>
    <name type="scientific">Salmonella typhimurium (strain LT2 / SGSC1412 / ATCC 700720)</name>
    <dbReference type="NCBI Taxonomy" id="99287"/>
    <lineage>
        <taxon>Bacteria</taxon>
        <taxon>Pseudomonadati</taxon>
        <taxon>Pseudomonadota</taxon>
        <taxon>Gammaproteobacteria</taxon>
        <taxon>Enterobacterales</taxon>
        <taxon>Enterobacteriaceae</taxon>
        <taxon>Salmonella</taxon>
    </lineage>
</organism>
<evidence type="ECO:0000250" key="1"/>
<evidence type="ECO:0000255" key="2"/>
<evidence type="ECO:0000305" key="3"/>